<gene>
    <name evidence="1" type="primary">purQ</name>
    <name type="ordered locus">RL2608</name>
</gene>
<sequence length="223" mass="23681">MKSAVVQLPGLNRDRDMIAALTKISGQPPVTIWQTETEIPDVDLIVIPGGFSYGDYLRCGAIAARMPVMQAIIDKASKGVKVLGVCNGFQILVEAGLLPGALMRNSSLKFVCREIKLEVVNAETDFTRAYAQGQVIRCPVAHHDGNYFADDATLAAIEGNGQVVFRYAEGTNPNGSINDIAAVMNEKGNVLGMMPHPENLIEAAHGGSDGRGLFASALDVIAA</sequence>
<name>PURQ_RHIJ3</name>
<proteinExistence type="inferred from homology"/>
<reference key="1">
    <citation type="journal article" date="2006" name="Genome Biol.">
        <title>The genome of Rhizobium leguminosarum has recognizable core and accessory components.</title>
        <authorList>
            <person name="Young J.P.W."/>
            <person name="Crossman L.C."/>
            <person name="Johnston A.W.B."/>
            <person name="Thomson N.R."/>
            <person name="Ghazoui Z.F."/>
            <person name="Hull K.H."/>
            <person name="Wexler M."/>
            <person name="Curson A.R.J."/>
            <person name="Todd J.D."/>
            <person name="Poole P.S."/>
            <person name="Mauchline T.H."/>
            <person name="East A.K."/>
            <person name="Quail M.A."/>
            <person name="Churcher C."/>
            <person name="Arrowsmith C."/>
            <person name="Cherevach I."/>
            <person name="Chillingworth T."/>
            <person name="Clarke K."/>
            <person name="Cronin A."/>
            <person name="Davis P."/>
            <person name="Fraser A."/>
            <person name="Hance Z."/>
            <person name="Hauser H."/>
            <person name="Jagels K."/>
            <person name="Moule S."/>
            <person name="Mungall K."/>
            <person name="Norbertczak H."/>
            <person name="Rabbinowitsch E."/>
            <person name="Sanders M."/>
            <person name="Simmonds M."/>
            <person name="Whitehead S."/>
            <person name="Parkhill J."/>
        </authorList>
    </citation>
    <scope>NUCLEOTIDE SEQUENCE [LARGE SCALE GENOMIC DNA]</scope>
    <source>
        <strain>DSM 114642 / LMG 32736 / 3841</strain>
    </source>
</reference>
<dbReference type="EC" id="6.3.5.3" evidence="1"/>
<dbReference type="EC" id="3.5.1.2" evidence="1"/>
<dbReference type="EMBL" id="AM236080">
    <property type="protein sequence ID" value="CAK08096.1"/>
    <property type="molecule type" value="Genomic_DNA"/>
</dbReference>
<dbReference type="RefSeq" id="WP_003540067.1">
    <property type="nucleotide sequence ID" value="NC_008380.1"/>
</dbReference>
<dbReference type="SMR" id="Q1MG27"/>
<dbReference type="EnsemblBacteria" id="CAK08096">
    <property type="protein sequence ID" value="CAK08096"/>
    <property type="gene ID" value="RL2608"/>
</dbReference>
<dbReference type="KEGG" id="rle:RL2608"/>
<dbReference type="eggNOG" id="COG0047">
    <property type="taxonomic scope" value="Bacteria"/>
</dbReference>
<dbReference type="HOGENOM" id="CLU_001031_3_1_5"/>
<dbReference type="UniPathway" id="UPA00074">
    <property type="reaction ID" value="UER00128"/>
</dbReference>
<dbReference type="Proteomes" id="UP000006575">
    <property type="component" value="Chromosome"/>
</dbReference>
<dbReference type="GO" id="GO:0005737">
    <property type="term" value="C:cytoplasm"/>
    <property type="evidence" value="ECO:0007669"/>
    <property type="project" value="UniProtKB-SubCell"/>
</dbReference>
<dbReference type="GO" id="GO:0005524">
    <property type="term" value="F:ATP binding"/>
    <property type="evidence" value="ECO:0007669"/>
    <property type="project" value="UniProtKB-KW"/>
</dbReference>
<dbReference type="GO" id="GO:0004359">
    <property type="term" value="F:glutaminase activity"/>
    <property type="evidence" value="ECO:0007669"/>
    <property type="project" value="UniProtKB-EC"/>
</dbReference>
<dbReference type="GO" id="GO:0004642">
    <property type="term" value="F:phosphoribosylformylglycinamidine synthase activity"/>
    <property type="evidence" value="ECO:0007669"/>
    <property type="project" value="UniProtKB-UniRule"/>
</dbReference>
<dbReference type="GO" id="GO:0006189">
    <property type="term" value="P:'de novo' IMP biosynthetic process"/>
    <property type="evidence" value="ECO:0007669"/>
    <property type="project" value="UniProtKB-UniRule"/>
</dbReference>
<dbReference type="CDD" id="cd01740">
    <property type="entry name" value="GATase1_FGAR_AT"/>
    <property type="match status" value="1"/>
</dbReference>
<dbReference type="Gene3D" id="3.40.50.880">
    <property type="match status" value="1"/>
</dbReference>
<dbReference type="HAMAP" id="MF_00421">
    <property type="entry name" value="PurQ"/>
    <property type="match status" value="1"/>
</dbReference>
<dbReference type="InterPro" id="IPR029062">
    <property type="entry name" value="Class_I_gatase-like"/>
</dbReference>
<dbReference type="InterPro" id="IPR010075">
    <property type="entry name" value="PRibForGlyAmidine_synth_PurQ"/>
</dbReference>
<dbReference type="NCBIfam" id="TIGR01737">
    <property type="entry name" value="FGAM_synth_I"/>
    <property type="match status" value="1"/>
</dbReference>
<dbReference type="NCBIfam" id="NF002957">
    <property type="entry name" value="PRK03619.1"/>
    <property type="match status" value="1"/>
</dbReference>
<dbReference type="PANTHER" id="PTHR47552">
    <property type="entry name" value="PHOSPHORIBOSYLFORMYLGLYCINAMIDINE SYNTHASE SUBUNIT PURQ"/>
    <property type="match status" value="1"/>
</dbReference>
<dbReference type="PANTHER" id="PTHR47552:SF1">
    <property type="entry name" value="PHOSPHORIBOSYLFORMYLGLYCINAMIDINE SYNTHASE SUBUNIT PURQ"/>
    <property type="match status" value="1"/>
</dbReference>
<dbReference type="Pfam" id="PF13507">
    <property type="entry name" value="GATase_5"/>
    <property type="match status" value="1"/>
</dbReference>
<dbReference type="PIRSF" id="PIRSF001586">
    <property type="entry name" value="FGAM_synth_I"/>
    <property type="match status" value="1"/>
</dbReference>
<dbReference type="SMART" id="SM01211">
    <property type="entry name" value="GATase_5"/>
    <property type="match status" value="1"/>
</dbReference>
<dbReference type="SUPFAM" id="SSF52317">
    <property type="entry name" value="Class I glutamine amidotransferase-like"/>
    <property type="match status" value="1"/>
</dbReference>
<dbReference type="PROSITE" id="PS51273">
    <property type="entry name" value="GATASE_TYPE_1"/>
    <property type="match status" value="1"/>
</dbReference>
<feature type="chain" id="PRO_0000252721" description="Phosphoribosylformylglycinamidine synthase subunit PurQ">
    <location>
        <begin position="1"/>
        <end position="223"/>
    </location>
</feature>
<feature type="domain" description="Glutamine amidotransferase type-1" evidence="1">
    <location>
        <begin position="3"/>
        <end position="223"/>
    </location>
</feature>
<feature type="active site" description="Nucleophile" evidence="1">
    <location>
        <position position="86"/>
    </location>
</feature>
<feature type="active site" evidence="1">
    <location>
        <position position="196"/>
    </location>
</feature>
<feature type="active site" evidence="1">
    <location>
        <position position="198"/>
    </location>
</feature>
<keyword id="KW-0067">ATP-binding</keyword>
<keyword id="KW-0963">Cytoplasm</keyword>
<keyword id="KW-0315">Glutamine amidotransferase</keyword>
<keyword id="KW-0378">Hydrolase</keyword>
<keyword id="KW-0436">Ligase</keyword>
<keyword id="KW-0547">Nucleotide-binding</keyword>
<keyword id="KW-0658">Purine biosynthesis</keyword>
<evidence type="ECO:0000255" key="1">
    <source>
        <dbReference type="HAMAP-Rule" id="MF_00421"/>
    </source>
</evidence>
<comment type="function">
    <text evidence="1">Part of the phosphoribosylformylglycinamidine synthase complex involved in the purines biosynthetic pathway. Catalyzes the ATP-dependent conversion of formylglycinamide ribonucleotide (FGAR) and glutamine to yield formylglycinamidine ribonucleotide (FGAM) and glutamate. The FGAM synthase complex is composed of three subunits. PurQ produces an ammonia molecule by converting glutamine to glutamate. PurL transfers the ammonia molecule to FGAR to form FGAM in an ATP-dependent manner. PurS interacts with PurQ and PurL and is thought to assist in the transfer of the ammonia molecule from PurQ to PurL.</text>
</comment>
<comment type="catalytic activity">
    <reaction evidence="1">
        <text>N(2)-formyl-N(1)-(5-phospho-beta-D-ribosyl)glycinamide + L-glutamine + ATP + H2O = 2-formamido-N(1)-(5-O-phospho-beta-D-ribosyl)acetamidine + L-glutamate + ADP + phosphate + H(+)</text>
        <dbReference type="Rhea" id="RHEA:17129"/>
        <dbReference type="ChEBI" id="CHEBI:15377"/>
        <dbReference type="ChEBI" id="CHEBI:15378"/>
        <dbReference type="ChEBI" id="CHEBI:29985"/>
        <dbReference type="ChEBI" id="CHEBI:30616"/>
        <dbReference type="ChEBI" id="CHEBI:43474"/>
        <dbReference type="ChEBI" id="CHEBI:58359"/>
        <dbReference type="ChEBI" id="CHEBI:147286"/>
        <dbReference type="ChEBI" id="CHEBI:147287"/>
        <dbReference type="ChEBI" id="CHEBI:456216"/>
        <dbReference type="EC" id="6.3.5.3"/>
    </reaction>
</comment>
<comment type="catalytic activity">
    <reaction evidence="1">
        <text>L-glutamine + H2O = L-glutamate + NH4(+)</text>
        <dbReference type="Rhea" id="RHEA:15889"/>
        <dbReference type="ChEBI" id="CHEBI:15377"/>
        <dbReference type="ChEBI" id="CHEBI:28938"/>
        <dbReference type="ChEBI" id="CHEBI:29985"/>
        <dbReference type="ChEBI" id="CHEBI:58359"/>
        <dbReference type="EC" id="3.5.1.2"/>
    </reaction>
</comment>
<comment type="pathway">
    <text evidence="1">Purine metabolism; IMP biosynthesis via de novo pathway; 5-amino-1-(5-phospho-D-ribosyl)imidazole from N(2)-formyl-N(1)-(5-phospho-D-ribosyl)glycinamide: step 1/2.</text>
</comment>
<comment type="subunit">
    <text evidence="1">Part of the FGAM synthase complex composed of 1 PurL, 1 PurQ and 2 PurS subunits.</text>
</comment>
<comment type="subcellular location">
    <subcellularLocation>
        <location evidence="1">Cytoplasm</location>
    </subcellularLocation>
</comment>
<organism>
    <name type="scientific">Rhizobium johnstonii (strain DSM 114642 / LMG 32736 / 3841)</name>
    <name type="common">Rhizobium leguminosarum bv. viciae</name>
    <dbReference type="NCBI Taxonomy" id="216596"/>
    <lineage>
        <taxon>Bacteria</taxon>
        <taxon>Pseudomonadati</taxon>
        <taxon>Pseudomonadota</taxon>
        <taxon>Alphaproteobacteria</taxon>
        <taxon>Hyphomicrobiales</taxon>
        <taxon>Rhizobiaceae</taxon>
        <taxon>Rhizobium/Agrobacterium group</taxon>
        <taxon>Rhizobium</taxon>
        <taxon>Rhizobium johnstonii</taxon>
    </lineage>
</organism>
<protein>
    <recommendedName>
        <fullName evidence="1">Phosphoribosylformylglycinamidine synthase subunit PurQ</fullName>
        <shortName evidence="1">FGAM synthase</shortName>
        <ecNumber evidence="1">6.3.5.3</ecNumber>
    </recommendedName>
    <alternativeName>
        <fullName evidence="1">Formylglycinamide ribonucleotide amidotransferase subunit I</fullName>
        <shortName evidence="1">FGAR amidotransferase I</shortName>
        <shortName evidence="1">FGAR-AT I</shortName>
    </alternativeName>
    <alternativeName>
        <fullName evidence="1">Glutaminase PurQ</fullName>
        <ecNumber evidence="1">3.5.1.2</ecNumber>
    </alternativeName>
    <alternativeName>
        <fullName evidence="1">Phosphoribosylformylglycinamidine synthase subunit I</fullName>
    </alternativeName>
</protein>
<accession>Q1MG27</accession>